<gene>
    <name evidence="1" type="primary">groEL</name>
    <name evidence="1" type="synonym">groL</name>
    <name type="ordered locus">SeAg_B4608</name>
</gene>
<dbReference type="EC" id="5.6.1.7" evidence="1"/>
<dbReference type="EMBL" id="CP001138">
    <property type="protein sequence ID" value="ACH49797.1"/>
    <property type="molecule type" value="Genomic_DNA"/>
</dbReference>
<dbReference type="RefSeq" id="WP_000729127.1">
    <property type="nucleotide sequence ID" value="NC_011149.1"/>
</dbReference>
<dbReference type="SMR" id="B5F2L0"/>
<dbReference type="KEGG" id="sea:SeAg_B4608"/>
<dbReference type="HOGENOM" id="CLU_016503_3_0_6"/>
<dbReference type="Proteomes" id="UP000008819">
    <property type="component" value="Chromosome"/>
</dbReference>
<dbReference type="GO" id="GO:0005737">
    <property type="term" value="C:cytoplasm"/>
    <property type="evidence" value="ECO:0007669"/>
    <property type="project" value="UniProtKB-SubCell"/>
</dbReference>
<dbReference type="GO" id="GO:0005524">
    <property type="term" value="F:ATP binding"/>
    <property type="evidence" value="ECO:0007669"/>
    <property type="project" value="UniProtKB-UniRule"/>
</dbReference>
<dbReference type="GO" id="GO:0140662">
    <property type="term" value="F:ATP-dependent protein folding chaperone"/>
    <property type="evidence" value="ECO:0007669"/>
    <property type="project" value="InterPro"/>
</dbReference>
<dbReference type="GO" id="GO:0016853">
    <property type="term" value="F:isomerase activity"/>
    <property type="evidence" value="ECO:0007669"/>
    <property type="project" value="UniProtKB-KW"/>
</dbReference>
<dbReference type="GO" id="GO:0051082">
    <property type="term" value="F:unfolded protein binding"/>
    <property type="evidence" value="ECO:0007669"/>
    <property type="project" value="UniProtKB-UniRule"/>
</dbReference>
<dbReference type="GO" id="GO:0042026">
    <property type="term" value="P:protein refolding"/>
    <property type="evidence" value="ECO:0007669"/>
    <property type="project" value="UniProtKB-UniRule"/>
</dbReference>
<dbReference type="CDD" id="cd03344">
    <property type="entry name" value="GroEL"/>
    <property type="match status" value="1"/>
</dbReference>
<dbReference type="FunFam" id="1.10.560.10:FF:000001">
    <property type="entry name" value="60 kDa chaperonin"/>
    <property type="match status" value="1"/>
</dbReference>
<dbReference type="FunFam" id="3.50.7.10:FF:000001">
    <property type="entry name" value="60 kDa chaperonin"/>
    <property type="match status" value="1"/>
</dbReference>
<dbReference type="Gene3D" id="3.50.7.10">
    <property type="entry name" value="GroEL"/>
    <property type="match status" value="1"/>
</dbReference>
<dbReference type="Gene3D" id="1.10.560.10">
    <property type="entry name" value="GroEL-like equatorial domain"/>
    <property type="match status" value="1"/>
</dbReference>
<dbReference type="Gene3D" id="3.30.260.10">
    <property type="entry name" value="TCP-1-like chaperonin intermediate domain"/>
    <property type="match status" value="1"/>
</dbReference>
<dbReference type="HAMAP" id="MF_00600">
    <property type="entry name" value="CH60"/>
    <property type="match status" value="1"/>
</dbReference>
<dbReference type="InterPro" id="IPR018370">
    <property type="entry name" value="Chaperonin_Cpn60_CS"/>
</dbReference>
<dbReference type="InterPro" id="IPR001844">
    <property type="entry name" value="Cpn60/GroEL"/>
</dbReference>
<dbReference type="InterPro" id="IPR002423">
    <property type="entry name" value="Cpn60/GroEL/TCP-1"/>
</dbReference>
<dbReference type="InterPro" id="IPR027409">
    <property type="entry name" value="GroEL-like_apical_dom_sf"/>
</dbReference>
<dbReference type="InterPro" id="IPR027413">
    <property type="entry name" value="GROEL-like_equatorial_sf"/>
</dbReference>
<dbReference type="InterPro" id="IPR027410">
    <property type="entry name" value="TCP-1-like_intermed_sf"/>
</dbReference>
<dbReference type="NCBIfam" id="TIGR02348">
    <property type="entry name" value="GroEL"/>
    <property type="match status" value="1"/>
</dbReference>
<dbReference type="NCBIfam" id="NF000592">
    <property type="entry name" value="PRK00013.1"/>
    <property type="match status" value="1"/>
</dbReference>
<dbReference type="NCBIfam" id="NF009487">
    <property type="entry name" value="PRK12849.1"/>
    <property type="match status" value="1"/>
</dbReference>
<dbReference type="NCBIfam" id="NF009488">
    <property type="entry name" value="PRK12850.1"/>
    <property type="match status" value="1"/>
</dbReference>
<dbReference type="NCBIfam" id="NF009489">
    <property type="entry name" value="PRK12851.1"/>
    <property type="match status" value="1"/>
</dbReference>
<dbReference type="PANTHER" id="PTHR45633">
    <property type="entry name" value="60 KDA HEAT SHOCK PROTEIN, MITOCHONDRIAL"/>
    <property type="match status" value="1"/>
</dbReference>
<dbReference type="Pfam" id="PF00118">
    <property type="entry name" value="Cpn60_TCP1"/>
    <property type="match status" value="1"/>
</dbReference>
<dbReference type="PRINTS" id="PR00298">
    <property type="entry name" value="CHAPERONIN60"/>
</dbReference>
<dbReference type="SUPFAM" id="SSF52029">
    <property type="entry name" value="GroEL apical domain-like"/>
    <property type="match status" value="1"/>
</dbReference>
<dbReference type="SUPFAM" id="SSF48592">
    <property type="entry name" value="GroEL equatorial domain-like"/>
    <property type="match status" value="1"/>
</dbReference>
<dbReference type="SUPFAM" id="SSF54849">
    <property type="entry name" value="GroEL-intermediate domain like"/>
    <property type="match status" value="1"/>
</dbReference>
<dbReference type="PROSITE" id="PS00296">
    <property type="entry name" value="CHAPERONINS_CPN60"/>
    <property type="match status" value="1"/>
</dbReference>
<sequence>MAAKDVKFGNDARVKMLRGVNVLADAVKVTLGPKGRNVVLDKSFGAPTITKDGVSVAREIELEDKFENMGAQMVKEVASKANDAAGDGTTTATVLAQSIITEGLKAVAAGMNPMDLKRGIDKAVAAAVEELKALSVPCSDSKAIAQVGTISANSDETVGKLIAEAMDKVGKEGVITVEDGTGLQDELDVVEGMQFDRGYLSPYFINKPETGAVELESPFILLADKKISNIREMLPVLEAVAKAGKPLLIIAEDVEGEALATLVVNTMRGIVKVAAVKAPGFGDRRKAMLQDIATLTGGTVISEEIGMELEKATLEDLGQAKRVVINKDTTTIIDGVGEEAAIQGRVAQIRQQIEEATSDYDREKLQERVAKLAGGVAVIKVGAATEVEMKEKKARVEDALHATRAAVEEGVVAGGGVALIRVASKIADLKGQNEDQNVGIKVALRAMEAPLRQIVLNCGEEPSVVANTVKGGDGNYGYNAATEEYGNMIDMGILDPTKVTRSALQYAASVAGLMITTECMVTDLPKSDAPDLGAAGGMGGMGGMM</sequence>
<reference key="1">
    <citation type="journal article" date="2011" name="J. Bacteriol.">
        <title>Comparative genomics of 28 Salmonella enterica isolates: evidence for CRISPR-mediated adaptive sublineage evolution.</title>
        <authorList>
            <person name="Fricke W.F."/>
            <person name="Mammel M.K."/>
            <person name="McDermott P.F."/>
            <person name="Tartera C."/>
            <person name="White D.G."/>
            <person name="Leclerc J.E."/>
            <person name="Ravel J."/>
            <person name="Cebula T.A."/>
        </authorList>
    </citation>
    <scope>NUCLEOTIDE SEQUENCE [LARGE SCALE GENOMIC DNA]</scope>
    <source>
        <strain>SL483</strain>
    </source>
</reference>
<keyword id="KW-0067">ATP-binding</keyword>
<keyword id="KW-0143">Chaperone</keyword>
<keyword id="KW-0963">Cytoplasm</keyword>
<keyword id="KW-0413">Isomerase</keyword>
<keyword id="KW-0547">Nucleotide-binding</keyword>
<evidence type="ECO:0000255" key="1">
    <source>
        <dbReference type="HAMAP-Rule" id="MF_00600"/>
    </source>
</evidence>
<organism>
    <name type="scientific">Salmonella agona (strain SL483)</name>
    <dbReference type="NCBI Taxonomy" id="454166"/>
    <lineage>
        <taxon>Bacteria</taxon>
        <taxon>Pseudomonadati</taxon>
        <taxon>Pseudomonadota</taxon>
        <taxon>Gammaproteobacteria</taxon>
        <taxon>Enterobacterales</taxon>
        <taxon>Enterobacteriaceae</taxon>
        <taxon>Salmonella</taxon>
    </lineage>
</organism>
<feature type="chain" id="PRO_1000130051" description="Chaperonin GroEL">
    <location>
        <begin position="1"/>
        <end position="545"/>
    </location>
</feature>
<feature type="binding site" evidence="1">
    <location>
        <begin position="30"/>
        <end position="33"/>
    </location>
    <ligand>
        <name>ATP</name>
        <dbReference type="ChEBI" id="CHEBI:30616"/>
    </ligand>
</feature>
<feature type="binding site" evidence="1">
    <location>
        <position position="51"/>
    </location>
    <ligand>
        <name>ATP</name>
        <dbReference type="ChEBI" id="CHEBI:30616"/>
    </ligand>
</feature>
<feature type="binding site" evidence="1">
    <location>
        <begin position="87"/>
        <end position="91"/>
    </location>
    <ligand>
        <name>ATP</name>
        <dbReference type="ChEBI" id="CHEBI:30616"/>
    </ligand>
</feature>
<feature type="binding site" evidence="1">
    <location>
        <position position="415"/>
    </location>
    <ligand>
        <name>ATP</name>
        <dbReference type="ChEBI" id="CHEBI:30616"/>
    </ligand>
</feature>
<feature type="binding site" evidence="1">
    <location>
        <begin position="479"/>
        <end position="481"/>
    </location>
    <ligand>
        <name>ATP</name>
        <dbReference type="ChEBI" id="CHEBI:30616"/>
    </ligand>
</feature>
<feature type="binding site" evidence="1">
    <location>
        <position position="495"/>
    </location>
    <ligand>
        <name>ATP</name>
        <dbReference type="ChEBI" id="CHEBI:30616"/>
    </ligand>
</feature>
<comment type="function">
    <text evidence="1">Together with its co-chaperonin GroES, plays an essential role in assisting protein folding. The GroEL-GroES system forms a nano-cage that allows encapsulation of the non-native substrate proteins and provides a physical environment optimized to promote and accelerate protein folding.</text>
</comment>
<comment type="catalytic activity">
    <reaction evidence="1">
        <text>ATP + H2O + a folded polypeptide = ADP + phosphate + an unfolded polypeptide.</text>
        <dbReference type="EC" id="5.6.1.7"/>
    </reaction>
</comment>
<comment type="subunit">
    <text evidence="1">Forms a cylinder of 14 subunits composed of two heptameric rings stacked back-to-back. Interacts with the co-chaperonin GroES.</text>
</comment>
<comment type="subcellular location">
    <subcellularLocation>
        <location evidence="1">Cytoplasm</location>
    </subcellularLocation>
</comment>
<comment type="similarity">
    <text evidence="1">Belongs to the chaperonin (HSP60) family.</text>
</comment>
<name>CH60_SALA4</name>
<protein>
    <recommendedName>
        <fullName evidence="1">Chaperonin GroEL</fullName>
        <ecNumber evidence="1">5.6.1.7</ecNumber>
    </recommendedName>
    <alternativeName>
        <fullName evidence="1">60 kDa chaperonin</fullName>
    </alternativeName>
    <alternativeName>
        <fullName evidence="1">Chaperonin-60</fullName>
        <shortName evidence="1">Cpn60</shortName>
    </alternativeName>
</protein>
<proteinExistence type="inferred from homology"/>
<accession>B5F2L0</accession>